<proteinExistence type="inferred from homology"/>
<accession>A4SNL5</accession>
<name>BPT_AERS4</name>
<protein>
    <recommendedName>
        <fullName evidence="1">Aspartate/glutamate leucyltransferase</fullName>
        <ecNumber evidence="1">2.3.2.29</ecNumber>
    </recommendedName>
</protein>
<organism>
    <name type="scientific">Aeromonas salmonicida (strain A449)</name>
    <dbReference type="NCBI Taxonomy" id="382245"/>
    <lineage>
        <taxon>Bacteria</taxon>
        <taxon>Pseudomonadati</taxon>
        <taxon>Pseudomonadota</taxon>
        <taxon>Gammaproteobacteria</taxon>
        <taxon>Aeromonadales</taxon>
        <taxon>Aeromonadaceae</taxon>
        <taxon>Aeromonas</taxon>
    </lineage>
</organism>
<gene>
    <name evidence="1" type="primary">bpt</name>
    <name type="ordered locus">ASA_2444</name>
</gene>
<comment type="function">
    <text evidence="1">Functions in the N-end rule pathway of protein degradation where it conjugates Leu from its aminoacyl-tRNA to the N-termini of proteins containing an N-terminal aspartate or glutamate.</text>
</comment>
<comment type="catalytic activity">
    <reaction evidence="1">
        <text>N-terminal L-glutamyl-[protein] + L-leucyl-tRNA(Leu) = N-terminal L-leucyl-L-glutamyl-[protein] + tRNA(Leu) + H(+)</text>
        <dbReference type="Rhea" id="RHEA:50412"/>
        <dbReference type="Rhea" id="RHEA-COMP:9613"/>
        <dbReference type="Rhea" id="RHEA-COMP:9622"/>
        <dbReference type="Rhea" id="RHEA-COMP:12664"/>
        <dbReference type="Rhea" id="RHEA-COMP:12668"/>
        <dbReference type="ChEBI" id="CHEBI:15378"/>
        <dbReference type="ChEBI" id="CHEBI:64721"/>
        <dbReference type="ChEBI" id="CHEBI:78442"/>
        <dbReference type="ChEBI" id="CHEBI:78494"/>
        <dbReference type="ChEBI" id="CHEBI:133041"/>
        <dbReference type="EC" id="2.3.2.29"/>
    </reaction>
</comment>
<comment type="catalytic activity">
    <reaction evidence="1">
        <text>N-terminal L-aspartyl-[protein] + L-leucyl-tRNA(Leu) = N-terminal L-leucyl-L-aspartyl-[protein] + tRNA(Leu) + H(+)</text>
        <dbReference type="Rhea" id="RHEA:50420"/>
        <dbReference type="Rhea" id="RHEA-COMP:9613"/>
        <dbReference type="Rhea" id="RHEA-COMP:9622"/>
        <dbReference type="Rhea" id="RHEA-COMP:12669"/>
        <dbReference type="Rhea" id="RHEA-COMP:12674"/>
        <dbReference type="ChEBI" id="CHEBI:15378"/>
        <dbReference type="ChEBI" id="CHEBI:64720"/>
        <dbReference type="ChEBI" id="CHEBI:78442"/>
        <dbReference type="ChEBI" id="CHEBI:78494"/>
        <dbReference type="ChEBI" id="CHEBI:133042"/>
        <dbReference type="EC" id="2.3.2.29"/>
    </reaction>
</comment>
<comment type="subcellular location">
    <subcellularLocation>
        <location evidence="1">Cytoplasm</location>
    </subcellularLocation>
</comment>
<comment type="similarity">
    <text evidence="1">Belongs to the R-transferase family. Bpt subfamily.</text>
</comment>
<reference key="1">
    <citation type="journal article" date="2008" name="BMC Genomics">
        <title>The genome of Aeromonas salmonicida subsp. salmonicida A449: insights into the evolution of a fish pathogen.</title>
        <authorList>
            <person name="Reith M.E."/>
            <person name="Singh R.K."/>
            <person name="Curtis B."/>
            <person name="Boyd J.M."/>
            <person name="Bouevitch A."/>
            <person name="Kimball J."/>
            <person name="Munholland J."/>
            <person name="Murphy C."/>
            <person name="Sarty D."/>
            <person name="Williams J."/>
            <person name="Nash J.H."/>
            <person name="Johnson S.C."/>
            <person name="Brown L.L."/>
        </authorList>
    </citation>
    <scope>NUCLEOTIDE SEQUENCE [LARGE SCALE GENOMIC DNA]</scope>
    <source>
        <strain>A449</strain>
    </source>
</reference>
<keyword id="KW-0012">Acyltransferase</keyword>
<keyword id="KW-0963">Cytoplasm</keyword>
<keyword id="KW-0808">Transferase</keyword>
<dbReference type="EC" id="2.3.2.29" evidence="1"/>
<dbReference type="EMBL" id="CP000644">
    <property type="protein sequence ID" value="ABO90487.1"/>
    <property type="molecule type" value="Genomic_DNA"/>
</dbReference>
<dbReference type="RefSeq" id="WP_005310729.1">
    <property type="nucleotide sequence ID" value="NC_009348.1"/>
</dbReference>
<dbReference type="SMR" id="A4SNL5"/>
<dbReference type="STRING" id="29491.GCA_000820065_01482"/>
<dbReference type="KEGG" id="asa:ASA_2444"/>
<dbReference type="eggNOG" id="COG2935">
    <property type="taxonomic scope" value="Bacteria"/>
</dbReference>
<dbReference type="HOGENOM" id="CLU_077607_0_0_6"/>
<dbReference type="Proteomes" id="UP000000225">
    <property type="component" value="Chromosome"/>
</dbReference>
<dbReference type="GO" id="GO:0005737">
    <property type="term" value="C:cytoplasm"/>
    <property type="evidence" value="ECO:0007669"/>
    <property type="project" value="UniProtKB-SubCell"/>
</dbReference>
<dbReference type="GO" id="GO:0004057">
    <property type="term" value="F:arginyl-tRNA--protein transferase activity"/>
    <property type="evidence" value="ECO:0007669"/>
    <property type="project" value="InterPro"/>
</dbReference>
<dbReference type="GO" id="GO:0008914">
    <property type="term" value="F:leucyl-tRNA--protein transferase activity"/>
    <property type="evidence" value="ECO:0007669"/>
    <property type="project" value="UniProtKB-UniRule"/>
</dbReference>
<dbReference type="GO" id="GO:0071596">
    <property type="term" value="P:ubiquitin-dependent protein catabolic process via the N-end rule pathway"/>
    <property type="evidence" value="ECO:0007669"/>
    <property type="project" value="InterPro"/>
</dbReference>
<dbReference type="HAMAP" id="MF_00689">
    <property type="entry name" value="Bpt"/>
    <property type="match status" value="1"/>
</dbReference>
<dbReference type="InterPro" id="IPR016181">
    <property type="entry name" value="Acyl_CoA_acyltransferase"/>
</dbReference>
<dbReference type="InterPro" id="IPR017138">
    <property type="entry name" value="Asp_Glu_LeuTrfase"/>
</dbReference>
<dbReference type="InterPro" id="IPR030700">
    <property type="entry name" value="N-end_Aminoacyl_Trfase"/>
</dbReference>
<dbReference type="InterPro" id="IPR007472">
    <property type="entry name" value="N-end_Aminoacyl_Trfase_C"/>
</dbReference>
<dbReference type="InterPro" id="IPR007471">
    <property type="entry name" value="N-end_Aminoacyl_Trfase_N"/>
</dbReference>
<dbReference type="NCBIfam" id="NF002341">
    <property type="entry name" value="PRK01305.1-1"/>
    <property type="match status" value="1"/>
</dbReference>
<dbReference type="NCBIfam" id="NF002342">
    <property type="entry name" value="PRK01305.1-3"/>
    <property type="match status" value="1"/>
</dbReference>
<dbReference type="NCBIfam" id="NF002345">
    <property type="entry name" value="PRK01305.2-2"/>
    <property type="match status" value="1"/>
</dbReference>
<dbReference type="NCBIfam" id="NF002346">
    <property type="entry name" value="PRK01305.2-3"/>
    <property type="match status" value="1"/>
</dbReference>
<dbReference type="PANTHER" id="PTHR21367">
    <property type="entry name" value="ARGININE-TRNA-PROTEIN TRANSFERASE 1"/>
    <property type="match status" value="1"/>
</dbReference>
<dbReference type="PANTHER" id="PTHR21367:SF1">
    <property type="entry name" value="ARGINYL-TRNA--PROTEIN TRANSFERASE 1"/>
    <property type="match status" value="1"/>
</dbReference>
<dbReference type="Pfam" id="PF04377">
    <property type="entry name" value="ATE_C"/>
    <property type="match status" value="1"/>
</dbReference>
<dbReference type="Pfam" id="PF04376">
    <property type="entry name" value="ATE_N"/>
    <property type="match status" value="1"/>
</dbReference>
<dbReference type="PIRSF" id="PIRSF037208">
    <property type="entry name" value="ATE_pro_prd"/>
    <property type="match status" value="1"/>
</dbReference>
<dbReference type="SUPFAM" id="SSF55729">
    <property type="entry name" value="Acyl-CoA N-acyltransferases (Nat)"/>
    <property type="match status" value="1"/>
</dbReference>
<feature type="chain" id="PRO_1000131969" description="Aspartate/glutamate leucyltransferase">
    <location>
        <begin position="1"/>
        <end position="238"/>
    </location>
</feature>
<evidence type="ECO:0000255" key="1">
    <source>
        <dbReference type="HAMAP-Rule" id="MF_00689"/>
    </source>
</evidence>
<sequence length="238" mass="28056">MTEEVILKVGLTPKHQCSYLGHEQEQLLVLMDHNLLNASGYERLLTAGFRRSGNDIYRPHCPACSACQSLRIHSERFVPSRSQKRIRQLNQDLELVLSYDDKPEYYQLYERYIRERHHDGSMYPPSRTQYKGFLHCDWMPPLYLEMRKDNRLIGVATTDLLPHSLSAMYTFFDPAHADRSLGTFAILSQLDLAKRTGRTWLYLGYLVEACRKMNYKRQYLPHERLIQGEWKNIDTKPE</sequence>